<feature type="chain" id="PRO_1000059475" description="Probable GTP-binding protein EngB">
    <location>
        <begin position="1"/>
        <end position="216"/>
    </location>
</feature>
<feature type="domain" description="EngB-type G" evidence="1">
    <location>
        <begin position="27"/>
        <end position="201"/>
    </location>
</feature>
<feature type="binding site" evidence="1">
    <location>
        <begin position="35"/>
        <end position="42"/>
    </location>
    <ligand>
        <name>GTP</name>
        <dbReference type="ChEBI" id="CHEBI:37565"/>
    </ligand>
</feature>
<feature type="binding site" evidence="1">
    <location>
        <position position="42"/>
    </location>
    <ligand>
        <name>Mg(2+)</name>
        <dbReference type="ChEBI" id="CHEBI:18420"/>
    </ligand>
</feature>
<feature type="binding site" evidence="1">
    <location>
        <begin position="62"/>
        <end position="66"/>
    </location>
    <ligand>
        <name>GTP</name>
        <dbReference type="ChEBI" id="CHEBI:37565"/>
    </ligand>
</feature>
<feature type="binding site" evidence="1">
    <location>
        <position position="64"/>
    </location>
    <ligand>
        <name>Mg(2+)</name>
        <dbReference type="ChEBI" id="CHEBI:18420"/>
    </ligand>
</feature>
<feature type="binding site" evidence="1">
    <location>
        <begin position="80"/>
        <end position="83"/>
    </location>
    <ligand>
        <name>GTP</name>
        <dbReference type="ChEBI" id="CHEBI:37565"/>
    </ligand>
</feature>
<feature type="binding site" evidence="1">
    <location>
        <begin position="147"/>
        <end position="150"/>
    </location>
    <ligand>
        <name>GTP</name>
        <dbReference type="ChEBI" id="CHEBI:37565"/>
    </ligand>
</feature>
<feature type="binding site" evidence="1">
    <location>
        <begin position="180"/>
        <end position="182"/>
    </location>
    <ligand>
        <name>GTP</name>
        <dbReference type="ChEBI" id="CHEBI:37565"/>
    </ligand>
</feature>
<evidence type="ECO:0000255" key="1">
    <source>
        <dbReference type="HAMAP-Rule" id="MF_00321"/>
    </source>
</evidence>
<name>ENGB_YERP3</name>
<dbReference type="EMBL" id="CP000720">
    <property type="protein sequence ID" value="ABS47674.1"/>
    <property type="molecule type" value="Genomic_DNA"/>
</dbReference>
<dbReference type="SMR" id="A7FCP5"/>
<dbReference type="KEGG" id="ypi:YpsIP31758_0022"/>
<dbReference type="HOGENOM" id="CLU_033732_1_2_6"/>
<dbReference type="Proteomes" id="UP000002412">
    <property type="component" value="Chromosome"/>
</dbReference>
<dbReference type="GO" id="GO:0005829">
    <property type="term" value="C:cytosol"/>
    <property type="evidence" value="ECO:0007669"/>
    <property type="project" value="TreeGrafter"/>
</dbReference>
<dbReference type="GO" id="GO:0005525">
    <property type="term" value="F:GTP binding"/>
    <property type="evidence" value="ECO:0007669"/>
    <property type="project" value="UniProtKB-UniRule"/>
</dbReference>
<dbReference type="GO" id="GO:0046872">
    <property type="term" value="F:metal ion binding"/>
    <property type="evidence" value="ECO:0007669"/>
    <property type="project" value="UniProtKB-KW"/>
</dbReference>
<dbReference type="GO" id="GO:0000917">
    <property type="term" value="P:division septum assembly"/>
    <property type="evidence" value="ECO:0007669"/>
    <property type="project" value="UniProtKB-KW"/>
</dbReference>
<dbReference type="CDD" id="cd01876">
    <property type="entry name" value="YihA_EngB"/>
    <property type="match status" value="1"/>
</dbReference>
<dbReference type="FunFam" id="3.40.50.300:FF:000098">
    <property type="entry name" value="Probable GTP-binding protein EngB"/>
    <property type="match status" value="1"/>
</dbReference>
<dbReference type="Gene3D" id="3.40.50.300">
    <property type="entry name" value="P-loop containing nucleotide triphosphate hydrolases"/>
    <property type="match status" value="1"/>
</dbReference>
<dbReference type="HAMAP" id="MF_00321">
    <property type="entry name" value="GTPase_EngB"/>
    <property type="match status" value="1"/>
</dbReference>
<dbReference type="InterPro" id="IPR030393">
    <property type="entry name" value="G_ENGB_dom"/>
</dbReference>
<dbReference type="InterPro" id="IPR006073">
    <property type="entry name" value="GTP-bd"/>
</dbReference>
<dbReference type="InterPro" id="IPR019987">
    <property type="entry name" value="GTP-bd_ribosome_bio_YsxC"/>
</dbReference>
<dbReference type="InterPro" id="IPR027417">
    <property type="entry name" value="P-loop_NTPase"/>
</dbReference>
<dbReference type="NCBIfam" id="TIGR03598">
    <property type="entry name" value="GTPase_YsxC"/>
    <property type="match status" value="1"/>
</dbReference>
<dbReference type="PANTHER" id="PTHR11649:SF13">
    <property type="entry name" value="ENGB-TYPE G DOMAIN-CONTAINING PROTEIN"/>
    <property type="match status" value="1"/>
</dbReference>
<dbReference type="PANTHER" id="PTHR11649">
    <property type="entry name" value="MSS1/TRME-RELATED GTP-BINDING PROTEIN"/>
    <property type="match status" value="1"/>
</dbReference>
<dbReference type="Pfam" id="PF01926">
    <property type="entry name" value="MMR_HSR1"/>
    <property type="match status" value="1"/>
</dbReference>
<dbReference type="SUPFAM" id="SSF52540">
    <property type="entry name" value="P-loop containing nucleoside triphosphate hydrolases"/>
    <property type="match status" value="1"/>
</dbReference>
<dbReference type="PROSITE" id="PS51706">
    <property type="entry name" value="G_ENGB"/>
    <property type="match status" value="1"/>
</dbReference>
<gene>
    <name evidence="1" type="primary">engB</name>
    <name type="ordered locus">YpsIP31758_0022</name>
</gene>
<comment type="function">
    <text evidence="1">Necessary for normal cell division and for the maintenance of normal septation.</text>
</comment>
<comment type="cofactor">
    <cofactor evidence="1">
        <name>Mg(2+)</name>
        <dbReference type="ChEBI" id="CHEBI:18420"/>
    </cofactor>
</comment>
<comment type="similarity">
    <text evidence="1">Belongs to the TRAFAC class TrmE-Era-EngA-EngB-Septin-like GTPase superfamily. EngB GTPase family.</text>
</comment>
<sequence>MTIRNYNYHMTHFVISAPDIRHLPRDEGIEVAFAGRSNAGKSSALNTLTNQKGLARTSKTPGRTQLINLFEVVDGVRLVDLPGYGYAEVPEEMKLKWQRALGEYLQKRNCLKGLVVLMDIRHPLKDLDQQMITWAVAVGTPVLLLLTKADKLASGARKAQLNLVREAIIPFMGDIQVEAFSSLKKIGVDKLREKLDTWFSEIPPEVMAEEFDGEGE</sequence>
<organism>
    <name type="scientific">Yersinia pseudotuberculosis serotype O:1b (strain IP 31758)</name>
    <dbReference type="NCBI Taxonomy" id="349747"/>
    <lineage>
        <taxon>Bacteria</taxon>
        <taxon>Pseudomonadati</taxon>
        <taxon>Pseudomonadota</taxon>
        <taxon>Gammaproteobacteria</taxon>
        <taxon>Enterobacterales</taxon>
        <taxon>Yersiniaceae</taxon>
        <taxon>Yersinia</taxon>
    </lineage>
</organism>
<reference key="1">
    <citation type="journal article" date="2007" name="PLoS Genet.">
        <title>The complete genome sequence of Yersinia pseudotuberculosis IP31758, the causative agent of Far East scarlet-like fever.</title>
        <authorList>
            <person name="Eppinger M."/>
            <person name="Rosovitz M.J."/>
            <person name="Fricke W.F."/>
            <person name="Rasko D.A."/>
            <person name="Kokorina G."/>
            <person name="Fayolle C."/>
            <person name="Lindler L.E."/>
            <person name="Carniel E."/>
            <person name="Ravel J."/>
        </authorList>
    </citation>
    <scope>NUCLEOTIDE SEQUENCE [LARGE SCALE GENOMIC DNA]</scope>
    <source>
        <strain>IP 31758</strain>
    </source>
</reference>
<accession>A7FCP5</accession>
<keyword id="KW-0131">Cell cycle</keyword>
<keyword id="KW-0132">Cell division</keyword>
<keyword id="KW-0342">GTP-binding</keyword>
<keyword id="KW-0460">Magnesium</keyword>
<keyword id="KW-0479">Metal-binding</keyword>
<keyword id="KW-0547">Nucleotide-binding</keyword>
<keyword id="KW-0717">Septation</keyword>
<proteinExistence type="inferred from homology"/>
<protein>
    <recommendedName>
        <fullName evidence="1">Probable GTP-binding protein EngB</fullName>
    </recommendedName>
</protein>